<reference key="1">
    <citation type="journal article" date="2005" name="Nature">
        <title>Genomic sequence of the pathogenic and allergenic filamentous fungus Aspergillus fumigatus.</title>
        <authorList>
            <person name="Nierman W.C."/>
            <person name="Pain A."/>
            <person name="Anderson M.J."/>
            <person name="Wortman J.R."/>
            <person name="Kim H.S."/>
            <person name="Arroyo J."/>
            <person name="Berriman M."/>
            <person name="Abe K."/>
            <person name="Archer D.B."/>
            <person name="Bermejo C."/>
            <person name="Bennett J.W."/>
            <person name="Bowyer P."/>
            <person name="Chen D."/>
            <person name="Collins M."/>
            <person name="Coulsen R."/>
            <person name="Davies R."/>
            <person name="Dyer P.S."/>
            <person name="Farman M.L."/>
            <person name="Fedorova N."/>
            <person name="Fedorova N.D."/>
            <person name="Feldblyum T.V."/>
            <person name="Fischer R."/>
            <person name="Fosker N."/>
            <person name="Fraser A."/>
            <person name="Garcia J.L."/>
            <person name="Garcia M.J."/>
            <person name="Goble A."/>
            <person name="Goldman G.H."/>
            <person name="Gomi K."/>
            <person name="Griffith-Jones S."/>
            <person name="Gwilliam R."/>
            <person name="Haas B.J."/>
            <person name="Haas H."/>
            <person name="Harris D.E."/>
            <person name="Horiuchi H."/>
            <person name="Huang J."/>
            <person name="Humphray S."/>
            <person name="Jimenez J."/>
            <person name="Keller N."/>
            <person name="Khouri H."/>
            <person name="Kitamoto K."/>
            <person name="Kobayashi T."/>
            <person name="Konzack S."/>
            <person name="Kulkarni R."/>
            <person name="Kumagai T."/>
            <person name="Lafton A."/>
            <person name="Latge J.-P."/>
            <person name="Li W."/>
            <person name="Lord A."/>
            <person name="Lu C."/>
            <person name="Majoros W.H."/>
            <person name="May G.S."/>
            <person name="Miller B.L."/>
            <person name="Mohamoud Y."/>
            <person name="Molina M."/>
            <person name="Monod M."/>
            <person name="Mouyna I."/>
            <person name="Mulligan S."/>
            <person name="Murphy L.D."/>
            <person name="O'Neil S."/>
            <person name="Paulsen I."/>
            <person name="Penalva M.A."/>
            <person name="Pertea M."/>
            <person name="Price C."/>
            <person name="Pritchard B.L."/>
            <person name="Quail M.A."/>
            <person name="Rabbinowitsch E."/>
            <person name="Rawlins N."/>
            <person name="Rajandream M.A."/>
            <person name="Reichard U."/>
            <person name="Renauld H."/>
            <person name="Robson G.D."/>
            <person name="Rodriguez de Cordoba S."/>
            <person name="Rodriguez-Pena J.M."/>
            <person name="Ronning C.M."/>
            <person name="Rutter S."/>
            <person name="Salzberg S.L."/>
            <person name="Sanchez M."/>
            <person name="Sanchez-Ferrero J.C."/>
            <person name="Saunders D."/>
            <person name="Seeger K."/>
            <person name="Squares R."/>
            <person name="Squares S."/>
            <person name="Takeuchi M."/>
            <person name="Tekaia F."/>
            <person name="Turner G."/>
            <person name="Vazquez de Aldana C.R."/>
            <person name="Weidman J."/>
            <person name="White O."/>
            <person name="Woodward J.R."/>
            <person name="Yu J.-H."/>
            <person name="Fraser C.M."/>
            <person name="Galagan J.E."/>
            <person name="Asai K."/>
            <person name="Machida M."/>
            <person name="Hall N."/>
            <person name="Barrell B.G."/>
            <person name="Denning D.W."/>
        </authorList>
    </citation>
    <scope>NUCLEOTIDE SEQUENCE [LARGE SCALE GENOMIC DNA]</scope>
    <source>
        <strain>ATCC MYA-4609 / CBS 101355 / FGSC A1100 / Af293</strain>
    </source>
</reference>
<dbReference type="EMBL" id="AAHF01000006">
    <property type="protein sequence ID" value="EAL88833.1"/>
    <property type="molecule type" value="Genomic_DNA"/>
</dbReference>
<dbReference type="RefSeq" id="XP_750871.1">
    <property type="nucleotide sequence ID" value="XM_745778.1"/>
</dbReference>
<dbReference type="SMR" id="Q4WMI1"/>
<dbReference type="FunCoup" id="Q4WMI1">
    <property type="interactions" value="893"/>
</dbReference>
<dbReference type="STRING" id="330879.Q4WMI1"/>
<dbReference type="EnsemblFungi" id="EAL88833">
    <property type="protein sequence ID" value="EAL88833"/>
    <property type="gene ID" value="AFUA_6G09820"/>
</dbReference>
<dbReference type="GeneID" id="3508176"/>
<dbReference type="KEGG" id="afm:AFUA_6G09820"/>
<dbReference type="VEuPathDB" id="FungiDB:Afu6g09820"/>
<dbReference type="eggNOG" id="KOG2773">
    <property type="taxonomic scope" value="Eukaryota"/>
</dbReference>
<dbReference type="HOGENOM" id="CLU_018299_2_2_1"/>
<dbReference type="InParanoid" id="Q4WMI1"/>
<dbReference type="OMA" id="INFMAPN"/>
<dbReference type="OrthoDB" id="5783963at2759"/>
<dbReference type="Proteomes" id="UP000002530">
    <property type="component" value="Chromosome 6"/>
</dbReference>
<dbReference type="GO" id="GO:0005730">
    <property type="term" value="C:nucleolus"/>
    <property type="evidence" value="ECO:0000318"/>
    <property type="project" value="GO_Central"/>
</dbReference>
<dbReference type="GO" id="GO:0000462">
    <property type="term" value="P:maturation of SSU-rRNA from tricistronic rRNA transcript (SSU-rRNA, 5.8S rRNA, LSU-rRNA)"/>
    <property type="evidence" value="ECO:0000318"/>
    <property type="project" value="GO_Central"/>
</dbReference>
<dbReference type="InterPro" id="IPR025160">
    <property type="entry name" value="AATF"/>
</dbReference>
<dbReference type="InterPro" id="IPR039223">
    <property type="entry name" value="AATF/Bfr2"/>
</dbReference>
<dbReference type="InterPro" id="IPR012617">
    <property type="entry name" value="AATF_C"/>
</dbReference>
<dbReference type="PANTHER" id="PTHR15565">
    <property type="entry name" value="AATF PROTEIN APOPTOSIS ANTAGONIZING TRANSCRIPTION FACTOR"/>
    <property type="match status" value="1"/>
</dbReference>
<dbReference type="PANTHER" id="PTHR15565:SF0">
    <property type="entry name" value="PROTEIN AATF"/>
    <property type="match status" value="1"/>
</dbReference>
<dbReference type="Pfam" id="PF13339">
    <property type="entry name" value="AATF-Che1"/>
    <property type="match status" value="1"/>
</dbReference>
<dbReference type="Pfam" id="PF08164">
    <property type="entry name" value="TRAUB"/>
    <property type="match status" value="1"/>
</dbReference>
<sequence>MAPKTLAERLAELEDPTPKDFDPEDLERAGPDSDDEGNEAADPNAGREHYQAVGKARLRRQDPINLGKQYAGSKISREALEAESDDDPFRPRSSDEEEDSEDEEEEDSELGSDEDEDASEESEEERPQRSRTSAKDSKRQRKESQVSSDEKDGEGMDTDGSEETEGSEDDSEDGFDEDDMSGEFSSDDDQEGDEDGDDDEDEDEETDNRKVRFQETSKSDDREELRRLMSSDQKTIAATISQAAKADAAKGRAVKQQRATFDALLNARIKLQKGLTAINRLSVTTKGSDETPSIDGEAIKSAESAALALWSTLEDLRLALADAQTQDESKKRKRPSAVSVATSTDSLWKRMTDLESDAVPHRRTVLDKWSLKVRGSTAALPNARGKLLGASASSQQTISAVIDAQVASETGDRAAKRRRHSSDEGPEPVYDDTVFYQSLLRDLVEQRMSSSDAITNGIDTLHLQLPSRQGIHPITGMRKDKVKRDVDTRASKGRKMRFDVHEKLQNFMAPEDRGTWTITAREEFFASLLGKTASGLLREGDDEDASAAEESDEDREEVGLRLFRS</sequence>
<keyword id="KW-0539">Nucleus</keyword>
<keyword id="KW-1185">Reference proteome</keyword>
<gene>
    <name type="primary">bfr2</name>
    <name type="ORF">AFUA_6G09820</name>
</gene>
<protein>
    <recommendedName>
        <fullName>Protein bfr2</fullName>
    </recommendedName>
</protein>
<accession>Q4WMI1</accession>
<evidence type="ECO:0000250" key="1"/>
<evidence type="ECO:0000256" key="2">
    <source>
        <dbReference type="SAM" id="MobiDB-lite"/>
    </source>
</evidence>
<evidence type="ECO:0000305" key="3"/>
<proteinExistence type="inferred from homology"/>
<name>BFR2_ASPFU</name>
<comment type="subcellular location">
    <subcellularLocation>
        <location evidence="1">Nucleus</location>
        <location evidence="1">Nucleolus</location>
    </subcellularLocation>
</comment>
<comment type="similarity">
    <text evidence="3">Belongs to the AATF family.</text>
</comment>
<organism>
    <name type="scientific">Aspergillus fumigatus (strain ATCC MYA-4609 / CBS 101355 / FGSC A1100 / Af293)</name>
    <name type="common">Neosartorya fumigata</name>
    <dbReference type="NCBI Taxonomy" id="330879"/>
    <lineage>
        <taxon>Eukaryota</taxon>
        <taxon>Fungi</taxon>
        <taxon>Dikarya</taxon>
        <taxon>Ascomycota</taxon>
        <taxon>Pezizomycotina</taxon>
        <taxon>Eurotiomycetes</taxon>
        <taxon>Eurotiomycetidae</taxon>
        <taxon>Eurotiales</taxon>
        <taxon>Aspergillaceae</taxon>
        <taxon>Aspergillus</taxon>
        <taxon>Aspergillus subgen. Fumigati</taxon>
    </lineage>
</organism>
<feature type="chain" id="PRO_0000056622" description="Protein bfr2">
    <location>
        <begin position="1"/>
        <end position="565"/>
    </location>
</feature>
<feature type="region of interest" description="Disordered" evidence="2">
    <location>
        <begin position="1"/>
        <end position="225"/>
    </location>
</feature>
<feature type="region of interest" description="Disordered" evidence="2">
    <location>
        <begin position="404"/>
        <end position="430"/>
    </location>
</feature>
<feature type="region of interest" description="Disordered" evidence="2">
    <location>
        <begin position="537"/>
        <end position="565"/>
    </location>
</feature>
<feature type="compositionally biased region" description="Basic and acidic residues" evidence="2">
    <location>
        <begin position="1"/>
        <end position="31"/>
    </location>
</feature>
<feature type="compositionally biased region" description="Acidic residues" evidence="2">
    <location>
        <begin position="95"/>
        <end position="124"/>
    </location>
</feature>
<feature type="compositionally biased region" description="Basic and acidic residues" evidence="2">
    <location>
        <begin position="125"/>
        <end position="154"/>
    </location>
</feature>
<feature type="compositionally biased region" description="Acidic residues" evidence="2">
    <location>
        <begin position="155"/>
        <end position="206"/>
    </location>
</feature>
<feature type="compositionally biased region" description="Basic and acidic residues" evidence="2">
    <location>
        <begin position="207"/>
        <end position="225"/>
    </location>
</feature>
<feature type="compositionally biased region" description="Acidic residues" evidence="2">
    <location>
        <begin position="540"/>
        <end position="556"/>
    </location>
</feature>